<accession>P70175</accession>
<gene>
    <name type="primary">Dlg3</name>
    <name type="synonym">Dlgh3</name>
</gene>
<evidence type="ECO:0000250" key="1"/>
<evidence type="ECO:0000255" key="2">
    <source>
        <dbReference type="PROSITE-ProRule" id="PRU00100"/>
    </source>
</evidence>
<evidence type="ECO:0000255" key="3">
    <source>
        <dbReference type="PROSITE-ProRule" id="PRU00143"/>
    </source>
</evidence>
<evidence type="ECO:0000255" key="4">
    <source>
        <dbReference type="PROSITE-ProRule" id="PRU00192"/>
    </source>
</evidence>
<evidence type="ECO:0000256" key="5">
    <source>
        <dbReference type="SAM" id="MobiDB-lite"/>
    </source>
</evidence>
<evidence type="ECO:0000269" key="6">
    <source>
    </source>
</evidence>
<evidence type="ECO:0000269" key="7">
    <source>
    </source>
</evidence>
<evidence type="ECO:0000269" key="8">
    <source>
    </source>
</evidence>
<evidence type="ECO:0000305" key="9"/>
<evidence type="ECO:0007744" key="10">
    <source>
    </source>
</evidence>
<evidence type="ECO:0007744" key="11">
    <source>
    </source>
</evidence>
<name>DLG3_MOUSE</name>
<sequence length="849" mass="93482">MHKHQHCCKCPECYEVTRLAALRRLEPPGYGDWQVPDPYGPSGGNGASSGYGGYSSQTLPSQAGATPTPRTKAKLIPTGRDVGPVPPKPVPGKSTPKLNGSGPGWWPECTCTNRDWYEQASPAPLLVNPEALEPSLSVNGSDGMFKYEEIVLERGNSGLGFSIAGGIDNPHVPDDPGIFITKIIPGGAAAMDGRLGVNDCVLRVNEVDVSEVVHSRAVEALKEAGPVVRLVVRRRQPPPETIMEVNLLKGPKGLGFSIAGGIGNQHIPGDNSIYITKIIEGGAAQKDGRLQIGDRLLAVNNTNLQDVRHEEAVASLKNTSDMVYLKVAKPGSIHLNDMYAPPDYASTFTALADNHISHNSSLGYLGAVESKVTYPAPPQVPPTRYSPIPRHMLAEEDFTREPRKIILHKGSTGLGFNIVGGEDGEGIFVSFILAGGPADLSGELRRGDRILSVNGVNLRNATHEQAAAALKRAGQSVTIVAQYRPEEYSRFESKIHDLREQMMNSSMSSGSGSLRTSEKRSLYVRALFDYDRTRDSCLPSQGLSFSYGDILHVINASDDEWWQARLVTPHGESEQIGVIPSKKRVEKKERARLKTVKFHARTGMIESNRDFPGLSDDYYGAKNLKGVTSNTSDSESSSKGQEDAILSYEPVTRQEIHYARPVIILGPMKDRVNDDLISEFPHKFGSCVPHTTRPRRDNEVDGQDYHFVVSREQMEKDIQDNKFIEAGQFNDNLYGTSIQSVRAVAERGKHCILDVSGNAIKRLQQAQLYPIAIFIKPKSIEALMEMNRRQTYEQANKIFDKAMKLEQEFGEYFTAIVQGDSLEEIYNKIKQIIEDQSGHYIWVPSPEKL</sequence>
<protein>
    <recommendedName>
        <fullName>Disks large homolog 3</fullName>
    </recommendedName>
    <alternativeName>
        <fullName>Synapse-associated protein 102</fullName>
        <shortName>SAP-102</shortName>
        <shortName>SAP102</shortName>
    </alternativeName>
</protein>
<reference key="1">
    <citation type="submission" date="1996-08" db="EMBL/GenBank/DDBJ databases">
        <authorList>
            <person name="Kohmura N."/>
            <person name="Makino S."/>
            <person name="Yagi T."/>
        </authorList>
    </citation>
    <scope>NUCLEOTIDE SEQUENCE [MRNA]</scope>
    <source>
        <strain>C57BL/6J</strain>
        <tissue>Brain</tissue>
    </source>
</reference>
<reference key="2">
    <citation type="journal article" date="2008" name="J. Proteome Res.">
        <title>Large-scale identification and evolution indexing of tyrosine phosphorylation sites from murine brain.</title>
        <authorList>
            <person name="Ballif B.A."/>
            <person name="Carey G.R."/>
            <person name="Sunyaev S.R."/>
            <person name="Gygi S.P."/>
        </authorList>
    </citation>
    <scope>PHOSPHORYLATION [LARGE SCALE ANALYSIS] AT TYR-705</scope>
    <scope>IDENTIFICATION BY MASS SPECTROMETRY [LARGE SCALE ANALYSIS]</scope>
    <source>
        <tissue>Brain</tissue>
    </source>
</reference>
<reference key="3">
    <citation type="journal article" date="2009" name="PLoS Biol.">
        <title>Neto1 is a novel CUB-domain NMDA receptor-interacting protein required for synaptic plasticity and learning.</title>
        <authorList>
            <person name="Ng D."/>
            <person name="Pitcher G.M."/>
            <person name="Szilard R.K."/>
            <person name="Sertie A."/>
            <person name="Kanisek M."/>
            <person name="Clapcote S.J."/>
            <person name="Lipina T."/>
            <person name="Kalia L.V."/>
            <person name="Joo D."/>
            <person name="McKerlie C."/>
            <person name="Cortez M."/>
            <person name="Roder J.C."/>
            <person name="Salter M.W."/>
            <person name="McInnes R.R."/>
        </authorList>
    </citation>
    <scope>INTERACTION WITH NETO1</scope>
</reference>
<reference key="4">
    <citation type="journal article" date="2010" name="Cell">
        <title>A tissue-specific atlas of mouse protein phosphorylation and expression.</title>
        <authorList>
            <person name="Huttlin E.L."/>
            <person name="Jedrychowski M.P."/>
            <person name="Elias J.E."/>
            <person name="Goswami T."/>
            <person name="Rad R."/>
            <person name="Beausoleil S.A."/>
            <person name="Villen J."/>
            <person name="Haas W."/>
            <person name="Sowa M.E."/>
            <person name="Gygi S.P."/>
        </authorList>
    </citation>
    <scope>PHOSPHORYLATION [LARGE SCALE ANALYSIS] AT SER-157</scope>
    <scope>IDENTIFICATION BY MASS SPECTROMETRY [LARGE SCALE ANALYSIS]</scope>
    <source>
        <tissue>Brain</tissue>
        <tissue>Kidney</tissue>
    </source>
</reference>
<reference key="5">
    <citation type="journal article" date="2011" name="EMBO J.">
        <title>DGKiota regulates presynaptic release during mGluR-dependent LTD.</title>
        <authorList>
            <person name="Yang J."/>
            <person name="Seo J."/>
            <person name="Nair R."/>
            <person name="Han S."/>
            <person name="Jang S."/>
            <person name="Kim K."/>
            <person name="Han K."/>
            <person name="Paik S.K."/>
            <person name="Choi J."/>
            <person name="Lee S."/>
            <person name="Bae Y.C."/>
            <person name="Topham M.K."/>
            <person name="Prescott S.M."/>
            <person name="Rhee J.S."/>
            <person name="Choi S.Y."/>
            <person name="Kim E."/>
        </authorList>
    </citation>
    <scope>INTERACTION WITH DGKI</scope>
</reference>
<reference key="6">
    <citation type="journal article" date="2014" name="Elife">
        <title>Flattop regulates basal body docking and positioning in mono- and multiciliated cells.</title>
        <authorList>
            <person name="Gegg M."/>
            <person name="Boettcher A."/>
            <person name="Burtscher I."/>
            <person name="Hasenoeder S."/>
            <person name="Van Campenhout C."/>
            <person name="Aichler M."/>
            <person name="Walch A."/>
            <person name="Grant S.G."/>
            <person name="Lickert H."/>
        </authorList>
    </citation>
    <scope>INTERACTION WITH FLTP</scope>
</reference>
<reference key="7">
    <citation type="journal article" date="2015" name="Mol. Autism">
        <title>The association of GPR85 with PSD-95-neuroligin complex and autism spectrum disorder: a molecular analysis.</title>
        <authorList>
            <person name="Fujita-Jimbo E."/>
            <person name="Tanabe Y."/>
            <person name="Yu Z."/>
            <person name="Kojima K."/>
            <person name="Mori M."/>
            <person name="Li H."/>
            <person name="Iwamoto S."/>
            <person name="Yamagata T."/>
            <person name="Momoi M.Y."/>
            <person name="Momoi T."/>
        </authorList>
    </citation>
    <scope>INTERACTION WITH GPR85</scope>
</reference>
<keyword id="KW-0597">Phosphoprotein</keyword>
<keyword id="KW-1185">Reference proteome</keyword>
<keyword id="KW-0677">Repeat</keyword>
<keyword id="KW-0728">SH3 domain</keyword>
<comment type="function">
    <text evidence="1">Required for learning most likely through its role in synaptic plasticity following NMDA receptor signaling.</text>
</comment>
<comment type="subunit">
    <text evidence="1 6 7 8">Interacts through its PDZ domains with NETO1, GRIN2B, SYNGAP1 and APC. Interacts through its first two PDZ domains with ERBB4. Interacts through its third PDZ domain with NLGN1, and probably with NLGN2 and NLGN3. Interacts through its guanylate kinase-like domain with DLGAP1, DLGAP2, DLGAP3 and DLGAP4 (By similarity). Interacts with FRMPD4 (via C-terminus) (By similarity). Interacts with LRFN1, LRFN2 and LRFN4 (By similarity). Interacts with FLTP. Interacts with GPR85 (PubMed:25780553). Interacts with DGKI (via PDZ-binding motif) (PubMed:21119615).</text>
</comment>
<comment type="interaction">
    <interactant intactId="EBI-396969">
        <id>P70175</id>
    </interactant>
    <interactant intactId="EBI-16879653">
        <id>P35347</id>
        <label>Crhr1</label>
    </interactant>
    <organismsDiffer>false</organismsDiffer>
    <experiments>3</experiments>
</comment>
<comment type="interaction">
    <interactant intactId="EBI-396969">
        <id>P70175</id>
    </interactant>
    <interactant intactId="EBI-300895">
        <id>Q62108</id>
        <label>Dlg4</label>
    </interactant>
    <organismsDiffer>false</organismsDiffer>
    <experiments>4</experiments>
</comment>
<comment type="similarity">
    <text evidence="9">Belongs to the MAGUK family.</text>
</comment>
<organism>
    <name type="scientific">Mus musculus</name>
    <name type="common">Mouse</name>
    <dbReference type="NCBI Taxonomy" id="10090"/>
    <lineage>
        <taxon>Eukaryota</taxon>
        <taxon>Metazoa</taxon>
        <taxon>Chordata</taxon>
        <taxon>Craniata</taxon>
        <taxon>Vertebrata</taxon>
        <taxon>Euteleostomi</taxon>
        <taxon>Mammalia</taxon>
        <taxon>Eutheria</taxon>
        <taxon>Euarchontoglires</taxon>
        <taxon>Glires</taxon>
        <taxon>Rodentia</taxon>
        <taxon>Myomorpha</taxon>
        <taxon>Muroidea</taxon>
        <taxon>Muridae</taxon>
        <taxon>Murinae</taxon>
        <taxon>Mus</taxon>
        <taxon>Mus</taxon>
    </lineage>
</organism>
<dbReference type="EMBL" id="D87117">
    <property type="protein sequence ID" value="BAA13249.1"/>
    <property type="molecule type" value="mRNA"/>
</dbReference>
<dbReference type="CCDS" id="CCDS30307.1"/>
<dbReference type="RefSeq" id="NP_001171249.1">
    <property type="nucleotide sequence ID" value="NM_001177778.2"/>
</dbReference>
<dbReference type="RefSeq" id="NP_058027.1">
    <property type="nucleotide sequence ID" value="NM_016747.5"/>
</dbReference>
<dbReference type="SMR" id="P70175"/>
<dbReference type="BioGRID" id="207274">
    <property type="interactions" value="24"/>
</dbReference>
<dbReference type="CORUM" id="P70175"/>
<dbReference type="DIP" id="DIP-31585N"/>
<dbReference type="FunCoup" id="P70175">
    <property type="interactions" value="1118"/>
</dbReference>
<dbReference type="IntAct" id="P70175">
    <property type="interactions" value="14"/>
</dbReference>
<dbReference type="MINT" id="P70175"/>
<dbReference type="STRING" id="10090.ENSMUSP00000085299"/>
<dbReference type="GlyGen" id="P70175">
    <property type="glycosylation" value="5 sites, 3 N-linked glycans (4 sites)"/>
</dbReference>
<dbReference type="iPTMnet" id="P70175"/>
<dbReference type="PhosphoSitePlus" id="P70175"/>
<dbReference type="SwissPalm" id="P70175"/>
<dbReference type="PaxDb" id="10090-ENSMUSP00000085299"/>
<dbReference type="PeptideAtlas" id="P70175"/>
<dbReference type="ProteomicsDB" id="279683"/>
<dbReference type="Pumba" id="P70175"/>
<dbReference type="ABCD" id="P70175">
    <property type="antibodies" value="3 sequenced antibodies"/>
</dbReference>
<dbReference type="Antibodypedia" id="342">
    <property type="antibodies" value="329 antibodies from 34 providers"/>
</dbReference>
<dbReference type="DNASU" id="53310"/>
<dbReference type="Ensembl" id="ENSMUST00000087984.11">
    <property type="protein sequence ID" value="ENSMUSP00000085299.5"/>
    <property type="gene ID" value="ENSMUSG00000000881.13"/>
</dbReference>
<dbReference type="GeneID" id="53310"/>
<dbReference type="KEGG" id="mmu:53310"/>
<dbReference type="UCSC" id="uc009twm.3">
    <property type="organism name" value="mouse"/>
</dbReference>
<dbReference type="AGR" id="MGI:1888986"/>
<dbReference type="CTD" id="1741"/>
<dbReference type="MGI" id="MGI:1888986">
    <property type="gene designation" value="Dlg3"/>
</dbReference>
<dbReference type="VEuPathDB" id="HostDB:ENSMUSG00000000881"/>
<dbReference type="eggNOG" id="KOG0708">
    <property type="taxonomic scope" value="Eukaryota"/>
</dbReference>
<dbReference type="GeneTree" id="ENSGT00940000159565"/>
<dbReference type="InParanoid" id="P70175"/>
<dbReference type="OrthoDB" id="78824at2759"/>
<dbReference type="PhylomeDB" id="P70175"/>
<dbReference type="TreeFam" id="TF323171"/>
<dbReference type="Reactome" id="R-MMU-438066">
    <property type="pathway name" value="Unblocking of NMDA receptors, glutamate binding and activation"/>
</dbReference>
<dbReference type="Reactome" id="R-MMU-451308">
    <property type="pathway name" value="Activation of Ca-permeable Kainate Receptor"/>
</dbReference>
<dbReference type="Reactome" id="R-MMU-5673001">
    <property type="pathway name" value="RAF/MAP kinase cascade"/>
</dbReference>
<dbReference type="Reactome" id="R-MMU-6794361">
    <property type="pathway name" value="Neurexins and neuroligins"/>
</dbReference>
<dbReference type="Reactome" id="R-MMU-8849932">
    <property type="pathway name" value="Synaptic adhesion-like molecules"/>
</dbReference>
<dbReference type="BioGRID-ORCS" id="53310">
    <property type="hits" value="2 hits in 79 CRISPR screens"/>
</dbReference>
<dbReference type="CD-CODE" id="CE726F99">
    <property type="entry name" value="Postsynaptic density"/>
</dbReference>
<dbReference type="ChiTaRS" id="Mpp3">
    <property type="organism name" value="mouse"/>
</dbReference>
<dbReference type="PRO" id="PR:P70175"/>
<dbReference type="Proteomes" id="UP000000589">
    <property type="component" value="Chromosome X"/>
</dbReference>
<dbReference type="RNAct" id="P70175">
    <property type="molecule type" value="protein"/>
</dbReference>
<dbReference type="Bgee" id="ENSMUSG00000000881">
    <property type="expression patterns" value="Expressed in floor plate of midbrain and 239 other cell types or tissues"/>
</dbReference>
<dbReference type="ExpressionAtlas" id="P70175">
    <property type="expression patterns" value="baseline and differential"/>
</dbReference>
<dbReference type="GO" id="GO:0032281">
    <property type="term" value="C:AMPA glutamate receptor complex"/>
    <property type="evidence" value="ECO:0000314"/>
    <property type="project" value="MGI"/>
</dbReference>
<dbReference type="GO" id="GO:0005923">
    <property type="term" value="C:bicellular tight junction"/>
    <property type="evidence" value="ECO:0000314"/>
    <property type="project" value="MGI"/>
</dbReference>
<dbReference type="GO" id="GO:0005911">
    <property type="term" value="C:cell-cell junction"/>
    <property type="evidence" value="ECO:0000314"/>
    <property type="project" value="MGI"/>
</dbReference>
<dbReference type="GO" id="GO:0005737">
    <property type="term" value="C:cytoplasm"/>
    <property type="evidence" value="ECO:0000314"/>
    <property type="project" value="MGI"/>
</dbReference>
<dbReference type="GO" id="GO:0098978">
    <property type="term" value="C:glutamatergic synapse"/>
    <property type="evidence" value="ECO:0000314"/>
    <property type="project" value="MGI"/>
</dbReference>
<dbReference type="GO" id="GO:0031594">
    <property type="term" value="C:neuromuscular junction"/>
    <property type="evidence" value="ECO:0007669"/>
    <property type="project" value="InterPro"/>
</dbReference>
<dbReference type="GO" id="GO:0043005">
    <property type="term" value="C:neuron projection"/>
    <property type="evidence" value="ECO:0007669"/>
    <property type="project" value="InterPro"/>
</dbReference>
<dbReference type="GO" id="GO:0005886">
    <property type="term" value="C:plasma membrane"/>
    <property type="evidence" value="ECO:0000314"/>
    <property type="project" value="MGI"/>
</dbReference>
<dbReference type="GO" id="GO:0019900">
    <property type="term" value="F:kinase binding"/>
    <property type="evidence" value="ECO:0000266"/>
    <property type="project" value="MGI"/>
</dbReference>
<dbReference type="GO" id="GO:0019902">
    <property type="term" value="F:phosphatase binding"/>
    <property type="evidence" value="ECO:0000250"/>
    <property type="project" value="UniProtKB"/>
</dbReference>
<dbReference type="GO" id="GO:0031625">
    <property type="term" value="F:ubiquitin protein ligase binding"/>
    <property type="evidence" value="ECO:0000353"/>
    <property type="project" value="MGI"/>
</dbReference>
<dbReference type="GO" id="GO:0007268">
    <property type="term" value="P:chemical synaptic transmission"/>
    <property type="evidence" value="ECO:0007669"/>
    <property type="project" value="InterPro"/>
</dbReference>
<dbReference type="GO" id="GO:0001736">
    <property type="term" value="P:establishment of planar polarity"/>
    <property type="evidence" value="ECO:0000315"/>
    <property type="project" value="MGI"/>
</dbReference>
<dbReference type="GO" id="GO:0045197">
    <property type="term" value="P:establishment or maintenance of epithelial cell apical/basal polarity"/>
    <property type="evidence" value="ECO:0000315"/>
    <property type="project" value="MGI"/>
</dbReference>
<dbReference type="GO" id="GO:0099072">
    <property type="term" value="P:regulation of postsynaptic membrane neurotransmitter receptor levels"/>
    <property type="evidence" value="ECO:0000314"/>
    <property type="project" value="SynGO"/>
</dbReference>
<dbReference type="CDD" id="cd00071">
    <property type="entry name" value="GMPK"/>
    <property type="match status" value="1"/>
</dbReference>
<dbReference type="CDD" id="cd06723">
    <property type="entry name" value="PDZ1_Dlg1-2-4-like"/>
    <property type="match status" value="1"/>
</dbReference>
<dbReference type="CDD" id="cd06724">
    <property type="entry name" value="PDZ2_Dlg1-2-4-like"/>
    <property type="match status" value="1"/>
</dbReference>
<dbReference type="CDD" id="cd06795">
    <property type="entry name" value="PDZ3_Dlg1-2-4-like"/>
    <property type="match status" value="1"/>
</dbReference>
<dbReference type="CDD" id="cd12029">
    <property type="entry name" value="SH3_DLG3"/>
    <property type="match status" value="1"/>
</dbReference>
<dbReference type="FunFam" id="3.40.50.300:FF:001402">
    <property type="entry name" value="Discs, large homolog 3 (Drosophila)"/>
    <property type="match status" value="1"/>
</dbReference>
<dbReference type="FunFam" id="2.30.30.40:FF:000008">
    <property type="entry name" value="Disks large homolog 1 isoform 2"/>
    <property type="match status" value="1"/>
</dbReference>
<dbReference type="FunFam" id="2.30.42.10:FF:000001">
    <property type="entry name" value="Disks large homolog 1 isoform 2"/>
    <property type="match status" value="1"/>
</dbReference>
<dbReference type="FunFam" id="3.30.63.10:FF:000001">
    <property type="entry name" value="Disks large homolog 1 isoform 2"/>
    <property type="match status" value="1"/>
</dbReference>
<dbReference type="FunFam" id="2.30.42.10:FF:000091">
    <property type="entry name" value="disks large homolog 1 isoform X8"/>
    <property type="match status" value="1"/>
</dbReference>
<dbReference type="FunFam" id="2.30.30.40:FF:000027">
    <property type="entry name" value="Disks large homolog 3 isoform 1"/>
    <property type="match status" value="1"/>
</dbReference>
<dbReference type="FunFam" id="2.30.42.10:FF:000002">
    <property type="entry name" value="Disks large homolog 4 isoform 2"/>
    <property type="match status" value="1"/>
</dbReference>
<dbReference type="Gene3D" id="2.30.42.10">
    <property type="match status" value="3"/>
</dbReference>
<dbReference type="Gene3D" id="3.30.63.10">
    <property type="entry name" value="Guanylate Kinase phosphate binding domain"/>
    <property type="match status" value="1"/>
</dbReference>
<dbReference type="Gene3D" id="3.40.50.300">
    <property type="entry name" value="P-loop containing nucleotide triphosphate hydrolases"/>
    <property type="match status" value="1"/>
</dbReference>
<dbReference type="Gene3D" id="2.30.30.40">
    <property type="entry name" value="SH3 Domains"/>
    <property type="match status" value="2"/>
</dbReference>
<dbReference type="InterPro" id="IPR019583">
    <property type="entry name" value="DLG1-4_PDZ_assoc"/>
</dbReference>
<dbReference type="InterPro" id="IPR016313">
    <property type="entry name" value="DLG1-like"/>
</dbReference>
<dbReference type="InterPro" id="IPR019590">
    <property type="entry name" value="DLG1_PEST_dom"/>
</dbReference>
<dbReference type="InterPro" id="IPR035763">
    <property type="entry name" value="DLG3_SH3"/>
</dbReference>
<dbReference type="InterPro" id="IPR008145">
    <property type="entry name" value="GK/Ca_channel_bsu"/>
</dbReference>
<dbReference type="InterPro" id="IPR008144">
    <property type="entry name" value="Guanylate_kin-like_dom"/>
</dbReference>
<dbReference type="InterPro" id="IPR020590">
    <property type="entry name" value="Guanylate_kinase_CS"/>
</dbReference>
<dbReference type="InterPro" id="IPR027417">
    <property type="entry name" value="P-loop_NTPase"/>
</dbReference>
<dbReference type="InterPro" id="IPR001478">
    <property type="entry name" value="PDZ"/>
</dbReference>
<dbReference type="InterPro" id="IPR036034">
    <property type="entry name" value="PDZ_sf"/>
</dbReference>
<dbReference type="InterPro" id="IPR036028">
    <property type="entry name" value="SH3-like_dom_sf"/>
</dbReference>
<dbReference type="InterPro" id="IPR001452">
    <property type="entry name" value="SH3_domain"/>
</dbReference>
<dbReference type="InterPro" id="IPR050614">
    <property type="entry name" value="Synaptic_Scaffolding_LAP-MAGUK"/>
</dbReference>
<dbReference type="PANTHER" id="PTHR23119">
    <property type="entry name" value="DISCS LARGE"/>
    <property type="match status" value="1"/>
</dbReference>
<dbReference type="PANTHER" id="PTHR23119:SF28">
    <property type="entry name" value="DISKS LARGE HOMOLOG 3"/>
    <property type="match status" value="1"/>
</dbReference>
<dbReference type="Pfam" id="PF00625">
    <property type="entry name" value="Guanylate_kin"/>
    <property type="match status" value="1"/>
</dbReference>
<dbReference type="Pfam" id="PF10608">
    <property type="entry name" value="MAGUK_N_PEST"/>
    <property type="match status" value="1"/>
</dbReference>
<dbReference type="Pfam" id="PF00595">
    <property type="entry name" value="PDZ"/>
    <property type="match status" value="3"/>
</dbReference>
<dbReference type="Pfam" id="PF10600">
    <property type="entry name" value="PDZ_assoc"/>
    <property type="match status" value="1"/>
</dbReference>
<dbReference type="Pfam" id="PF00018">
    <property type="entry name" value="SH3_1"/>
    <property type="match status" value="1"/>
</dbReference>
<dbReference type="PIRSF" id="PIRSF001741">
    <property type="entry name" value="MAGUK_DLGH"/>
    <property type="match status" value="1"/>
</dbReference>
<dbReference type="SMART" id="SM00072">
    <property type="entry name" value="GuKc"/>
    <property type="match status" value="1"/>
</dbReference>
<dbReference type="SMART" id="SM01277">
    <property type="entry name" value="MAGUK_N_PEST"/>
    <property type="match status" value="1"/>
</dbReference>
<dbReference type="SMART" id="SM00228">
    <property type="entry name" value="PDZ"/>
    <property type="match status" value="3"/>
</dbReference>
<dbReference type="SMART" id="SM00326">
    <property type="entry name" value="SH3"/>
    <property type="match status" value="1"/>
</dbReference>
<dbReference type="SUPFAM" id="SSF52540">
    <property type="entry name" value="P-loop containing nucleoside triphosphate hydrolases"/>
    <property type="match status" value="1"/>
</dbReference>
<dbReference type="SUPFAM" id="SSF50156">
    <property type="entry name" value="PDZ domain-like"/>
    <property type="match status" value="3"/>
</dbReference>
<dbReference type="SUPFAM" id="SSF50044">
    <property type="entry name" value="SH3-domain"/>
    <property type="match status" value="1"/>
</dbReference>
<dbReference type="PROSITE" id="PS00856">
    <property type="entry name" value="GUANYLATE_KINASE_1"/>
    <property type="match status" value="1"/>
</dbReference>
<dbReference type="PROSITE" id="PS50052">
    <property type="entry name" value="GUANYLATE_KINASE_2"/>
    <property type="match status" value="1"/>
</dbReference>
<dbReference type="PROSITE" id="PS50106">
    <property type="entry name" value="PDZ"/>
    <property type="match status" value="3"/>
</dbReference>
<dbReference type="PROSITE" id="PS50002">
    <property type="entry name" value="SH3"/>
    <property type="match status" value="1"/>
</dbReference>
<feature type="chain" id="PRO_0000094558" description="Disks large homolog 3">
    <location>
        <begin position="1"/>
        <end position="849"/>
    </location>
</feature>
<feature type="domain" description="PDZ 1" evidence="3">
    <location>
        <begin position="149"/>
        <end position="235"/>
    </location>
</feature>
<feature type="domain" description="PDZ 2" evidence="3">
    <location>
        <begin position="244"/>
        <end position="330"/>
    </location>
</feature>
<feature type="domain" description="PDZ 3" evidence="3">
    <location>
        <begin position="404"/>
        <end position="484"/>
    </location>
</feature>
<feature type="domain" description="SH3" evidence="4">
    <location>
        <begin position="519"/>
        <end position="589"/>
    </location>
</feature>
<feature type="domain" description="Guanylate kinase-like" evidence="2">
    <location>
        <begin position="659"/>
        <end position="834"/>
    </location>
</feature>
<feature type="region of interest" description="Disordered" evidence="5">
    <location>
        <begin position="32"/>
        <end position="101"/>
    </location>
</feature>
<feature type="compositionally biased region" description="Gly residues" evidence="5">
    <location>
        <begin position="41"/>
        <end position="53"/>
    </location>
</feature>
<feature type="compositionally biased region" description="Polar residues" evidence="5">
    <location>
        <begin position="57"/>
        <end position="69"/>
    </location>
</feature>
<feature type="modified residue" description="Phosphoserine" evidence="11">
    <location>
        <position position="157"/>
    </location>
</feature>
<feature type="modified residue" description="Phosphotyrosine" evidence="10">
    <location>
        <position position="705"/>
    </location>
</feature>
<proteinExistence type="evidence at protein level"/>